<comment type="subcellular location">
    <subcellularLocation>
        <location evidence="2">Membrane</location>
        <topology evidence="2">Multi-pass membrane protein</topology>
    </subcellularLocation>
</comment>
<sequence>MEDHTLVAIVVFFGNGEPFHVSLSVEMVFVLLLSSTRIHEVVVLICYKLQHATWSWGNMSKNFSLKPDISLSFLLDIISINDICIYGCIALTVVFIL</sequence>
<reference key="1">
    <citation type="journal article" date="1994" name="Science">
        <title>Complete nucleotide sequence of Saccharomyces cerevisiae chromosome VIII.</title>
        <authorList>
            <person name="Johnston M."/>
            <person name="Andrews S."/>
            <person name="Brinkman R."/>
            <person name="Cooper J."/>
            <person name="Ding H."/>
            <person name="Dover J."/>
            <person name="Du Z."/>
            <person name="Favello A."/>
            <person name="Fulton L."/>
            <person name="Gattung S."/>
            <person name="Geisel C."/>
            <person name="Kirsten J."/>
            <person name="Kucaba T."/>
            <person name="Hillier L.W."/>
            <person name="Jier M."/>
            <person name="Johnston L."/>
            <person name="Langston Y."/>
            <person name="Latreille P."/>
            <person name="Louis E.J."/>
            <person name="Macri C."/>
            <person name="Mardis E."/>
            <person name="Menezes S."/>
            <person name="Mouser L."/>
            <person name="Nhan M."/>
            <person name="Rifkin L."/>
            <person name="Riles L."/>
            <person name="St Peter H."/>
            <person name="Trevaskis E."/>
            <person name="Vaughan K."/>
            <person name="Vignati D."/>
            <person name="Wilcox L."/>
            <person name="Wohldman P."/>
            <person name="Waterston R."/>
            <person name="Wilson R."/>
            <person name="Vaudin M."/>
        </authorList>
    </citation>
    <scope>NUCLEOTIDE SEQUENCE [LARGE SCALE GENOMIC DNA]</scope>
    <source>
        <strain>ATCC 204508 / S288c</strain>
    </source>
</reference>
<reference key="2">
    <citation type="journal article" date="2002" name="Nat. Biotechnol.">
        <title>An integrated approach for finding overlooked genes in yeast.</title>
        <authorList>
            <person name="Kumar A."/>
            <person name="Harrison P.M."/>
            <person name="Cheung K.-H."/>
            <person name="Lan N."/>
            <person name="Echols N."/>
            <person name="Bertone P."/>
            <person name="Miller P."/>
            <person name="Gerstein M.B."/>
            <person name="Snyder M."/>
        </authorList>
    </citation>
    <scope>NUCLEOTIDE SEQUENCE [GENOMIC DNA]</scope>
</reference>
<reference key="3">
    <citation type="journal article" date="2014" name="G3 (Bethesda)">
        <title>The reference genome sequence of Saccharomyces cerevisiae: Then and now.</title>
        <authorList>
            <person name="Engel S.R."/>
            <person name="Dietrich F.S."/>
            <person name="Fisk D.G."/>
            <person name="Binkley G."/>
            <person name="Balakrishnan R."/>
            <person name="Costanzo M.C."/>
            <person name="Dwight S.S."/>
            <person name="Hitz B.C."/>
            <person name="Karra K."/>
            <person name="Nash R.S."/>
            <person name="Weng S."/>
            <person name="Wong E.D."/>
            <person name="Lloyd P."/>
            <person name="Skrzypek M.S."/>
            <person name="Miyasato S.R."/>
            <person name="Simison M."/>
            <person name="Cherry J.M."/>
        </authorList>
    </citation>
    <scope>GENOME REANNOTATION</scope>
    <source>
        <strain>ATCC 204508 / S288c</strain>
    </source>
</reference>
<feature type="chain" id="PRO_0000410451" description="Uncharacterized protein YHR214C-D">
    <location>
        <begin position="1"/>
        <end position="97"/>
    </location>
</feature>
<feature type="transmembrane region" description="Helical" evidence="1">
    <location>
        <begin position="5"/>
        <end position="25"/>
    </location>
</feature>
<feature type="transmembrane region" description="Helical" evidence="1">
    <location>
        <begin position="27"/>
        <end position="47"/>
    </location>
</feature>
<feature type="transmembrane region" description="Helical" evidence="1">
    <location>
        <begin position="77"/>
        <end position="97"/>
    </location>
</feature>
<organism>
    <name type="scientific">Saccharomyces cerevisiae (strain ATCC 204508 / S288c)</name>
    <name type="common">Baker's yeast</name>
    <dbReference type="NCBI Taxonomy" id="559292"/>
    <lineage>
        <taxon>Eukaryota</taxon>
        <taxon>Fungi</taxon>
        <taxon>Dikarya</taxon>
        <taxon>Ascomycota</taxon>
        <taxon>Saccharomycotina</taxon>
        <taxon>Saccharomycetes</taxon>
        <taxon>Saccharomycetales</taxon>
        <taxon>Saccharomycetaceae</taxon>
        <taxon>Saccharomyces</taxon>
    </lineage>
</organism>
<gene>
    <name type="ordered locus">YHR214C-D</name>
</gene>
<protein>
    <recommendedName>
        <fullName>Uncharacterized protein YHR214C-D</fullName>
    </recommendedName>
</protein>
<proteinExistence type="predicted"/>
<dbReference type="EMBL" id="U00029">
    <property type="status" value="NOT_ANNOTATED_CDS"/>
    <property type="molecule type" value="Genomic_DNA"/>
</dbReference>
<dbReference type="EMBL" id="AF479997">
    <property type="protein sequence ID" value="AAL79310.1"/>
    <property type="molecule type" value="Genomic_DNA"/>
</dbReference>
<dbReference type="EMBL" id="BK006934">
    <property type="protein sequence ID" value="DAA06912.1"/>
    <property type="molecule type" value="Genomic_DNA"/>
</dbReference>
<dbReference type="PIR" id="S53474">
    <property type="entry name" value="S53474"/>
</dbReference>
<dbReference type="RefSeq" id="NP_878094.1">
    <property type="nucleotide sequence ID" value="NM_001184601.1"/>
</dbReference>
<dbReference type="FunCoup" id="P0CX93">
    <property type="interactions" value="2"/>
</dbReference>
<dbReference type="EnsemblFungi" id="YAR069C_mRNA">
    <property type="protein sequence ID" value="YAR069C"/>
    <property type="gene ID" value="YAR069C"/>
</dbReference>
<dbReference type="EnsemblFungi" id="YHR214C-D_mRNA">
    <property type="protein sequence ID" value="YHR214C-D"/>
    <property type="gene ID" value="YHR214C-D"/>
</dbReference>
<dbReference type="GeneID" id="1466534"/>
<dbReference type="KEGG" id="sce:YHR214C-D"/>
<dbReference type="AGR" id="SGD:S000028653"/>
<dbReference type="SGD" id="S000028653">
    <property type="gene designation" value="YHR214C-D"/>
</dbReference>
<dbReference type="VEuPathDB" id="FungiDB:YHR214C-D"/>
<dbReference type="GeneTree" id="ENSGT00940000180920"/>
<dbReference type="HOGENOM" id="CLU_2348290_0_0_1"/>
<dbReference type="InParanoid" id="P0CX93"/>
<dbReference type="BioCyc" id="YEAST:G3O-31273-MONOMER"/>
<dbReference type="PRO" id="PR:P0CX93"/>
<dbReference type="Proteomes" id="UP000002311">
    <property type="component" value="Chromosome VIII"/>
</dbReference>
<dbReference type="RNAct" id="P0CX93">
    <property type="molecule type" value="protein"/>
</dbReference>
<dbReference type="ExpressionAtlas" id="P0CX93">
    <property type="expression patterns" value="baseline"/>
</dbReference>
<dbReference type="GO" id="GO:0016020">
    <property type="term" value="C:membrane"/>
    <property type="evidence" value="ECO:0007669"/>
    <property type="project" value="UniProtKB-SubCell"/>
</dbReference>
<keyword id="KW-0472">Membrane</keyword>
<keyword id="KW-1185">Reference proteome</keyword>
<keyword id="KW-0812">Transmembrane</keyword>
<keyword id="KW-1133">Transmembrane helix</keyword>
<evidence type="ECO:0000255" key="1"/>
<evidence type="ECO:0000305" key="2"/>
<accession>P0CX93</accession>
<accession>D3DLG8</accession>
<accession>P39565</accession>
<accession>Q547K7</accession>
<name>YH21D_YEAST</name>